<gene>
    <name evidence="1" type="primary">frsA</name>
    <name type="ordered locus">SbBS512_E0236</name>
</gene>
<evidence type="ECO:0000255" key="1">
    <source>
        <dbReference type="HAMAP-Rule" id="MF_01063"/>
    </source>
</evidence>
<organism>
    <name type="scientific">Shigella boydii serotype 18 (strain CDC 3083-94 / BS512)</name>
    <dbReference type="NCBI Taxonomy" id="344609"/>
    <lineage>
        <taxon>Bacteria</taxon>
        <taxon>Pseudomonadati</taxon>
        <taxon>Pseudomonadota</taxon>
        <taxon>Gammaproteobacteria</taxon>
        <taxon>Enterobacterales</taxon>
        <taxon>Enterobacteriaceae</taxon>
        <taxon>Shigella</taxon>
    </lineage>
</organism>
<keyword id="KW-0378">Hydrolase</keyword>
<keyword id="KW-1185">Reference proteome</keyword>
<keyword id="KW-0719">Serine esterase</keyword>
<feature type="chain" id="PRO_1000136528" description="Esterase FrsA">
    <location>
        <begin position="1"/>
        <end position="414"/>
    </location>
</feature>
<proteinExistence type="inferred from homology"/>
<accession>B2U3T0</accession>
<comment type="function">
    <text evidence="1">Catalyzes the hydrolysis of esters.</text>
</comment>
<comment type="catalytic activity">
    <reaction evidence="1">
        <text>a carboxylic ester + H2O = an alcohol + a carboxylate + H(+)</text>
        <dbReference type="Rhea" id="RHEA:21164"/>
        <dbReference type="ChEBI" id="CHEBI:15377"/>
        <dbReference type="ChEBI" id="CHEBI:15378"/>
        <dbReference type="ChEBI" id="CHEBI:29067"/>
        <dbReference type="ChEBI" id="CHEBI:30879"/>
        <dbReference type="ChEBI" id="CHEBI:33308"/>
        <dbReference type="EC" id="3.1.1.1"/>
    </reaction>
</comment>
<comment type="similarity">
    <text evidence="1">Belongs to the FrsA family.</text>
</comment>
<name>FRSA_SHIB3</name>
<protein>
    <recommendedName>
        <fullName evidence="1">Esterase FrsA</fullName>
        <ecNumber evidence="1">3.1.1.1</ecNumber>
    </recommendedName>
</protein>
<sequence>MTQANLSETLFKPRFKHPETSTLVRRFNHGAQPPVQSALDGKTIPHWYRMINRLMWIWRGIDPREILDVQARIVMSDAERTDDDLYDTVIGYRGGNWIYEWATQAMVWQQKACAEEDPQLSGRHWLHAATLYNIAAYPHLKGDDLAEQAQALSNRAYEEAAQRLPGTMRQMEFTVPGGAPITGFLHMPKGDGPFPTVLMCGGLDAMQTDYYSLYERYFAPRGIVMLTIDMPSVGFSSKWKLTQDSSLLHQHVLKALPNVPWVDHTRVAAFGFRFGANVAVRLAYLESPRLKAVACLGPVVHTLLSDFKCQQQVPEMYLDVLASRLGMHDASDEALRVELNRYSLKVQGLLGRRCPTPMLSGYWKNDPFSPEEDSRLITSSSADGKLLEIPFYPVYRNFDKGLQEITGWIEKRLC</sequence>
<reference key="1">
    <citation type="submission" date="2008-05" db="EMBL/GenBank/DDBJ databases">
        <title>Complete sequence of Shigella boydii serotype 18 strain BS512.</title>
        <authorList>
            <person name="Rasko D.A."/>
            <person name="Rosovitz M."/>
            <person name="Maurelli A.T."/>
            <person name="Myers G."/>
            <person name="Seshadri R."/>
            <person name="Cer R."/>
            <person name="Jiang L."/>
            <person name="Ravel J."/>
            <person name="Sebastian Y."/>
        </authorList>
    </citation>
    <scope>NUCLEOTIDE SEQUENCE [LARGE SCALE GENOMIC DNA]</scope>
    <source>
        <strain>CDC 3083-94 / BS512</strain>
    </source>
</reference>
<dbReference type="EC" id="3.1.1.1" evidence="1"/>
<dbReference type="EMBL" id="CP001063">
    <property type="protein sequence ID" value="ACD10222.1"/>
    <property type="molecule type" value="Genomic_DNA"/>
</dbReference>
<dbReference type="RefSeq" id="WP_000189553.1">
    <property type="nucleotide sequence ID" value="NC_010658.1"/>
</dbReference>
<dbReference type="SMR" id="B2U3T0"/>
<dbReference type="STRING" id="344609.SbBS512_E0236"/>
<dbReference type="ESTHER" id="shifl-yafa">
    <property type="family name" value="Duf_1100-R"/>
</dbReference>
<dbReference type="KEGG" id="sbc:SbBS512_E0236"/>
<dbReference type="HOGENOM" id="CLU_036819_0_0_6"/>
<dbReference type="Proteomes" id="UP000001030">
    <property type="component" value="Chromosome"/>
</dbReference>
<dbReference type="GO" id="GO:0106435">
    <property type="term" value="F:carboxylesterase activity"/>
    <property type="evidence" value="ECO:0007669"/>
    <property type="project" value="UniProtKB-EC"/>
</dbReference>
<dbReference type="FunFam" id="3.40.50.1820:FF:000022">
    <property type="entry name" value="Esterase FrsA"/>
    <property type="match status" value="1"/>
</dbReference>
<dbReference type="Gene3D" id="3.40.50.1820">
    <property type="entry name" value="alpha/beta hydrolase"/>
    <property type="match status" value="1"/>
</dbReference>
<dbReference type="HAMAP" id="MF_01063">
    <property type="entry name" value="FrsA"/>
    <property type="match status" value="1"/>
</dbReference>
<dbReference type="InterPro" id="IPR029058">
    <property type="entry name" value="AB_hydrolase_fold"/>
</dbReference>
<dbReference type="InterPro" id="IPR043423">
    <property type="entry name" value="FrsA"/>
</dbReference>
<dbReference type="InterPro" id="IPR010520">
    <property type="entry name" value="FrsA-like"/>
</dbReference>
<dbReference type="InterPro" id="IPR050261">
    <property type="entry name" value="FrsA_esterase"/>
</dbReference>
<dbReference type="NCBIfam" id="NF003460">
    <property type="entry name" value="PRK05077.1"/>
    <property type="match status" value="1"/>
</dbReference>
<dbReference type="PANTHER" id="PTHR22946">
    <property type="entry name" value="DIENELACTONE HYDROLASE DOMAIN-CONTAINING PROTEIN-RELATED"/>
    <property type="match status" value="1"/>
</dbReference>
<dbReference type="PANTHER" id="PTHR22946:SF4">
    <property type="entry name" value="ESTERASE FRSA"/>
    <property type="match status" value="1"/>
</dbReference>
<dbReference type="Pfam" id="PF06500">
    <property type="entry name" value="FrsA-like"/>
    <property type="match status" value="1"/>
</dbReference>
<dbReference type="SUPFAM" id="SSF53474">
    <property type="entry name" value="alpha/beta-Hydrolases"/>
    <property type="match status" value="1"/>
</dbReference>